<reference key="1">
    <citation type="journal article" date="2010" name="Genome Biol. Evol.">
        <title>Continuing evolution of Burkholderia mallei through genome reduction and large-scale rearrangements.</title>
        <authorList>
            <person name="Losada L."/>
            <person name="Ronning C.M."/>
            <person name="DeShazer D."/>
            <person name="Woods D."/>
            <person name="Fedorova N."/>
            <person name="Kim H.S."/>
            <person name="Shabalina S.A."/>
            <person name="Pearson T.R."/>
            <person name="Brinkac L."/>
            <person name="Tan P."/>
            <person name="Nandi T."/>
            <person name="Crabtree J."/>
            <person name="Badger J."/>
            <person name="Beckstrom-Sternberg S."/>
            <person name="Saqib M."/>
            <person name="Schutzer S.E."/>
            <person name="Keim P."/>
            <person name="Nierman W.C."/>
        </authorList>
    </citation>
    <scope>NUCLEOTIDE SEQUENCE [LARGE SCALE GENOMIC DNA]</scope>
    <source>
        <strain>1710b</strain>
    </source>
</reference>
<name>HIS3_BURP1</name>
<feature type="chain" id="PRO_0000229815" description="Phosphoribosyl-AMP cyclohydrolase">
    <location>
        <begin position="1"/>
        <end position="137"/>
    </location>
</feature>
<feature type="binding site" evidence="1">
    <location>
        <position position="83"/>
    </location>
    <ligand>
        <name>Mg(2+)</name>
        <dbReference type="ChEBI" id="CHEBI:18420"/>
    </ligand>
</feature>
<feature type="binding site" evidence="1">
    <location>
        <position position="84"/>
    </location>
    <ligand>
        <name>Zn(2+)</name>
        <dbReference type="ChEBI" id="CHEBI:29105"/>
        <note>ligand shared between dimeric partners</note>
    </ligand>
</feature>
<feature type="binding site" evidence="1">
    <location>
        <position position="85"/>
    </location>
    <ligand>
        <name>Mg(2+)</name>
        <dbReference type="ChEBI" id="CHEBI:18420"/>
    </ligand>
</feature>
<feature type="binding site" evidence="1">
    <location>
        <position position="87"/>
    </location>
    <ligand>
        <name>Mg(2+)</name>
        <dbReference type="ChEBI" id="CHEBI:18420"/>
    </ligand>
</feature>
<feature type="binding site" evidence="1">
    <location>
        <position position="101"/>
    </location>
    <ligand>
        <name>Zn(2+)</name>
        <dbReference type="ChEBI" id="CHEBI:29105"/>
        <note>ligand shared between dimeric partners</note>
    </ligand>
</feature>
<feature type="binding site" evidence="1">
    <location>
        <position position="108"/>
    </location>
    <ligand>
        <name>Zn(2+)</name>
        <dbReference type="ChEBI" id="CHEBI:29105"/>
        <note>ligand shared between dimeric partners</note>
    </ligand>
</feature>
<organism>
    <name type="scientific">Burkholderia pseudomallei (strain 1710b)</name>
    <dbReference type="NCBI Taxonomy" id="320372"/>
    <lineage>
        <taxon>Bacteria</taxon>
        <taxon>Pseudomonadati</taxon>
        <taxon>Pseudomonadota</taxon>
        <taxon>Betaproteobacteria</taxon>
        <taxon>Burkholderiales</taxon>
        <taxon>Burkholderiaceae</taxon>
        <taxon>Burkholderia</taxon>
        <taxon>pseudomallei group</taxon>
    </lineage>
</organism>
<accession>Q3JN03</accession>
<comment type="function">
    <text evidence="1">Catalyzes the hydrolysis of the adenine ring of phosphoribosyl-AMP.</text>
</comment>
<comment type="catalytic activity">
    <reaction evidence="1">
        <text>1-(5-phospho-beta-D-ribosyl)-5'-AMP + H2O = 1-(5-phospho-beta-D-ribosyl)-5-[(5-phospho-beta-D-ribosylamino)methylideneamino]imidazole-4-carboxamide</text>
        <dbReference type="Rhea" id="RHEA:20049"/>
        <dbReference type="ChEBI" id="CHEBI:15377"/>
        <dbReference type="ChEBI" id="CHEBI:58435"/>
        <dbReference type="ChEBI" id="CHEBI:59457"/>
        <dbReference type="EC" id="3.5.4.19"/>
    </reaction>
</comment>
<comment type="cofactor">
    <cofactor evidence="1">
        <name>Mg(2+)</name>
        <dbReference type="ChEBI" id="CHEBI:18420"/>
    </cofactor>
    <text evidence="1">Binds 1 Mg(2+) ion per subunit.</text>
</comment>
<comment type="cofactor">
    <cofactor evidence="1">
        <name>Zn(2+)</name>
        <dbReference type="ChEBI" id="CHEBI:29105"/>
    </cofactor>
    <text evidence="1">Binds 1 zinc ion per subunit.</text>
</comment>
<comment type="pathway">
    <text evidence="1">Amino-acid biosynthesis; L-histidine biosynthesis; L-histidine from 5-phospho-alpha-D-ribose 1-diphosphate: step 3/9.</text>
</comment>
<comment type="subunit">
    <text evidence="1">Homodimer.</text>
</comment>
<comment type="subcellular location">
    <subcellularLocation>
        <location evidence="1">Cytoplasm</location>
    </subcellularLocation>
</comment>
<comment type="similarity">
    <text evidence="1">Belongs to the PRA-CH family.</text>
</comment>
<gene>
    <name evidence="1" type="primary">hisI</name>
    <name type="ordered locus">BURPS1710b_3686</name>
</gene>
<sequence length="137" mass="15699">MNAEAKPGDWLGKVRWDANGLVPVIAQDAATNDVLMFAWMNRDALAKTIELKRAVYYSRSRQRLWFKGEESGHVQHVHEVRLDCDEDVVLLKVEQVEGIACHTGRRSCFFQKFEGTVDDGEWVAVDPVLKDPEHIYK</sequence>
<protein>
    <recommendedName>
        <fullName evidence="1">Phosphoribosyl-AMP cyclohydrolase</fullName>
        <shortName evidence="1">PRA-CH</shortName>
        <ecNumber evidence="1">3.5.4.19</ecNumber>
    </recommendedName>
</protein>
<dbReference type="EC" id="3.5.4.19" evidence="1"/>
<dbReference type="EMBL" id="CP000124">
    <property type="protein sequence ID" value="ABA48052.1"/>
    <property type="molecule type" value="Genomic_DNA"/>
</dbReference>
<dbReference type="RefSeq" id="WP_004201279.1">
    <property type="nucleotide sequence ID" value="NC_007434.1"/>
</dbReference>
<dbReference type="SMR" id="Q3JN03"/>
<dbReference type="EnsemblBacteria" id="ABA48052">
    <property type="protein sequence ID" value="ABA48052"/>
    <property type="gene ID" value="BURPS1710b_3686"/>
</dbReference>
<dbReference type="GeneID" id="93061749"/>
<dbReference type="KEGG" id="bpm:BURPS1710b_3686"/>
<dbReference type="HOGENOM" id="CLU_048577_5_0_4"/>
<dbReference type="UniPathway" id="UPA00031">
    <property type="reaction ID" value="UER00008"/>
</dbReference>
<dbReference type="Proteomes" id="UP000002700">
    <property type="component" value="Chromosome I"/>
</dbReference>
<dbReference type="GO" id="GO:0005737">
    <property type="term" value="C:cytoplasm"/>
    <property type="evidence" value="ECO:0007669"/>
    <property type="project" value="UniProtKB-SubCell"/>
</dbReference>
<dbReference type="GO" id="GO:0000287">
    <property type="term" value="F:magnesium ion binding"/>
    <property type="evidence" value="ECO:0007669"/>
    <property type="project" value="UniProtKB-UniRule"/>
</dbReference>
<dbReference type="GO" id="GO:0004635">
    <property type="term" value="F:phosphoribosyl-AMP cyclohydrolase activity"/>
    <property type="evidence" value="ECO:0007669"/>
    <property type="project" value="UniProtKB-UniRule"/>
</dbReference>
<dbReference type="GO" id="GO:0008270">
    <property type="term" value="F:zinc ion binding"/>
    <property type="evidence" value="ECO:0007669"/>
    <property type="project" value="UniProtKB-UniRule"/>
</dbReference>
<dbReference type="GO" id="GO:0000105">
    <property type="term" value="P:L-histidine biosynthetic process"/>
    <property type="evidence" value="ECO:0007669"/>
    <property type="project" value="UniProtKB-UniRule"/>
</dbReference>
<dbReference type="FunFam" id="3.10.20.810:FF:000001">
    <property type="entry name" value="Histidine biosynthesis bifunctional protein HisIE"/>
    <property type="match status" value="1"/>
</dbReference>
<dbReference type="Gene3D" id="3.10.20.810">
    <property type="entry name" value="Phosphoribosyl-AMP cyclohydrolase"/>
    <property type="match status" value="1"/>
</dbReference>
<dbReference type="HAMAP" id="MF_01021">
    <property type="entry name" value="HisI"/>
    <property type="match status" value="1"/>
</dbReference>
<dbReference type="InterPro" id="IPR026660">
    <property type="entry name" value="PRA-CH"/>
</dbReference>
<dbReference type="InterPro" id="IPR002496">
    <property type="entry name" value="PRib_AMP_CycHydrolase_dom"/>
</dbReference>
<dbReference type="InterPro" id="IPR038019">
    <property type="entry name" value="PRib_AMP_CycHydrolase_sf"/>
</dbReference>
<dbReference type="NCBIfam" id="NF000768">
    <property type="entry name" value="PRK00051.1"/>
    <property type="match status" value="1"/>
</dbReference>
<dbReference type="PANTHER" id="PTHR42945">
    <property type="entry name" value="HISTIDINE BIOSYNTHESIS BIFUNCTIONAL PROTEIN"/>
    <property type="match status" value="1"/>
</dbReference>
<dbReference type="PANTHER" id="PTHR42945:SF1">
    <property type="entry name" value="HISTIDINE BIOSYNTHESIS BIFUNCTIONAL PROTEIN HIS7"/>
    <property type="match status" value="1"/>
</dbReference>
<dbReference type="Pfam" id="PF01502">
    <property type="entry name" value="PRA-CH"/>
    <property type="match status" value="1"/>
</dbReference>
<dbReference type="SUPFAM" id="SSF141734">
    <property type="entry name" value="HisI-like"/>
    <property type="match status" value="1"/>
</dbReference>
<evidence type="ECO:0000255" key="1">
    <source>
        <dbReference type="HAMAP-Rule" id="MF_01021"/>
    </source>
</evidence>
<proteinExistence type="inferred from homology"/>
<keyword id="KW-0028">Amino-acid biosynthesis</keyword>
<keyword id="KW-0963">Cytoplasm</keyword>
<keyword id="KW-0368">Histidine biosynthesis</keyword>
<keyword id="KW-0378">Hydrolase</keyword>
<keyword id="KW-0460">Magnesium</keyword>
<keyword id="KW-0479">Metal-binding</keyword>
<keyword id="KW-0862">Zinc</keyword>